<name>RS3_STRS2</name>
<dbReference type="EMBL" id="CP000408">
    <property type="protein sequence ID" value="ABP91238.1"/>
    <property type="molecule type" value="Genomic_DNA"/>
</dbReference>
<dbReference type="SMR" id="A4VYP9"/>
<dbReference type="KEGG" id="ssv:SSU98_0078"/>
<dbReference type="HOGENOM" id="CLU_058591_0_2_9"/>
<dbReference type="GO" id="GO:0022627">
    <property type="term" value="C:cytosolic small ribosomal subunit"/>
    <property type="evidence" value="ECO:0007669"/>
    <property type="project" value="TreeGrafter"/>
</dbReference>
<dbReference type="GO" id="GO:0003729">
    <property type="term" value="F:mRNA binding"/>
    <property type="evidence" value="ECO:0007669"/>
    <property type="project" value="UniProtKB-UniRule"/>
</dbReference>
<dbReference type="GO" id="GO:0019843">
    <property type="term" value="F:rRNA binding"/>
    <property type="evidence" value="ECO:0007669"/>
    <property type="project" value="UniProtKB-UniRule"/>
</dbReference>
<dbReference type="GO" id="GO:0003735">
    <property type="term" value="F:structural constituent of ribosome"/>
    <property type="evidence" value="ECO:0007669"/>
    <property type="project" value="InterPro"/>
</dbReference>
<dbReference type="GO" id="GO:0006412">
    <property type="term" value="P:translation"/>
    <property type="evidence" value="ECO:0007669"/>
    <property type="project" value="UniProtKB-UniRule"/>
</dbReference>
<dbReference type="CDD" id="cd02412">
    <property type="entry name" value="KH-II_30S_S3"/>
    <property type="match status" value="1"/>
</dbReference>
<dbReference type="FunFam" id="3.30.1140.32:FF:000001">
    <property type="entry name" value="30S ribosomal protein S3"/>
    <property type="match status" value="1"/>
</dbReference>
<dbReference type="FunFam" id="3.30.300.20:FF:000001">
    <property type="entry name" value="30S ribosomal protein S3"/>
    <property type="match status" value="1"/>
</dbReference>
<dbReference type="Gene3D" id="3.30.300.20">
    <property type="match status" value="1"/>
</dbReference>
<dbReference type="Gene3D" id="3.30.1140.32">
    <property type="entry name" value="Ribosomal protein S3, C-terminal domain"/>
    <property type="match status" value="1"/>
</dbReference>
<dbReference type="HAMAP" id="MF_01309_B">
    <property type="entry name" value="Ribosomal_uS3_B"/>
    <property type="match status" value="1"/>
</dbReference>
<dbReference type="InterPro" id="IPR004087">
    <property type="entry name" value="KH_dom"/>
</dbReference>
<dbReference type="InterPro" id="IPR015946">
    <property type="entry name" value="KH_dom-like_a/b"/>
</dbReference>
<dbReference type="InterPro" id="IPR004044">
    <property type="entry name" value="KH_dom_type_2"/>
</dbReference>
<dbReference type="InterPro" id="IPR009019">
    <property type="entry name" value="KH_sf_prok-type"/>
</dbReference>
<dbReference type="InterPro" id="IPR036419">
    <property type="entry name" value="Ribosomal_S3_C_sf"/>
</dbReference>
<dbReference type="InterPro" id="IPR005704">
    <property type="entry name" value="Ribosomal_uS3_bac-typ"/>
</dbReference>
<dbReference type="InterPro" id="IPR001351">
    <property type="entry name" value="Ribosomal_uS3_C"/>
</dbReference>
<dbReference type="InterPro" id="IPR018280">
    <property type="entry name" value="Ribosomal_uS3_CS"/>
</dbReference>
<dbReference type="NCBIfam" id="TIGR01009">
    <property type="entry name" value="rpsC_bact"/>
    <property type="match status" value="1"/>
</dbReference>
<dbReference type="PANTHER" id="PTHR11760">
    <property type="entry name" value="30S/40S RIBOSOMAL PROTEIN S3"/>
    <property type="match status" value="1"/>
</dbReference>
<dbReference type="PANTHER" id="PTHR11760:SF19">
    <property type="entry name" value="SMALL RIBOSOMAL SUBUNIT PROTEIN US3C"/>
    <property type="match status" value="1"/>
</dbReference>
<dbReference type="Pfam" id="PF07650">
    <property type="entry name" value="KH_2"/>
    <property type="match status" value="1"/>
</dbReference>
<dbReference type="Pfam" id="PF00189">
    <property type="entry name" value="Ribosomal_S3_C"/>
    <property type="match status" value="1"/>
</dbReference>
<dbReference type="SMART" id="SM00322">
    <property type="entry name" value="KH"/>
    <property type="match status" value="1"/>
</dbReference>
<dbReference type="SUPFAM" id="SSF54814">
    <property type="entry name" value="Prokaryotic type KH domain (KH-domain type II)"/>
    <property type="match status" value="1"/>
</dbReference>
<dbReference type="SUPFAM" id="SSF54821">
    <property type="entry name" value="Ribosomal protein S3 C-terminal domain"/>
    <property type="match status" value="1"/>
</dbReference>
<dbReference type="PROSITE" id="PS50823">
    <property type="entry name" value="KH_TYPE_2"/>
    <property type="match status" value="1"/>
</dbReference>
<dbReference type="PROSITE" id="PS00548">
    <property type="entry name" value="RIBOSOMAL_S3"/>
    <property type="match status" value="1"/>
</dbReference>
<evidence type="ECO:0000255" key="1">
    <source>
        <dbReference type="HAMAP-Rule" id="MF_01309"/>
    </source>
</evidence>
<evidence type="ECO:0000305" key="2"/>
<protein>
    <recommendedName>
        <fullName evidence="1">Small ribosomal subunit protein uS3</fullName>
    </recommendedName>
    <alternativeName>
        <fullName evidence="2">30S ribosomal protein S3</fullName>
    </alternativeName>
</protein>
<comment type="function">
    <text evidence="1">Binds the lower part of the 30S subunit head. Binds mRNA in the 70S ribosome, positioning it for translation.</text>
</comment>
<comment type="subunit">
    <text evidence="1">Part of the 30S ribosomal subunit. Forms a tight complex with proteins S10 and S14.</text>
</comment>
<comment type="similarity">
    <text evidence="1">Belongs to the universal ribosomal protein uS3 family.</text>
</comment>
<accession>A4VYP9</accession>
<reference key="1">
    <citation type="journal article" date="2007" name="PLoS ONE">
        <title>A glimpse of streptococcal toxic shock syndrome from comparative genomics of S. suis 2 Chinese isolates.</title>
        <authorList>
            <person name="Chen C."/>
            <person name="Tang J."/>
            <person name="Dong W."/>
            <person name="Wang C."/>
            <person name="Feng Y."/>
            <person name="Wang J."/>
            <person name="Zheng F."/>
            <person name="Pan X."/>
            <person name="Liu D."/>
            <person name="Li M."/>
            <person name="Song Y."/>
            <person name="Zhu X."/>
            <person name="Sun H."/>
            <person name="Feng T."/>
            <person name="Guo Z."/>
            <person name="Ju A."/>
            <person name="Ge J."/>
            <person name="Dong Y."/>
            <person name="Sun W."/>
            <person name="Jiang Y."/>
            <person name="Wang J."/>
            <person name="Yan J."/>
            <person name="Yang H."/>
            <person name="Wang X."/>
            <person name="Gao G.F."/>
            <person name="Yang R."/>
            <person name="Wang J."/>
            <person name="Yu J."/>
        </authorList>
    </citation>
    <scope>NUCLEOTIDE SEQUENCE [LARGE SCALE GENOMIC DNA]</scope>
    <source>
        <strain>98HAH33</strain>
    </source>
</reference>
<organism>
    <name type="scientific">Streptococcus suis (strain 98HAH33)</name>
    <dbReference type="NCBI Taxonomy" id="391296"/>
    <lineage>
        <taxon>Bacteria</taxon>
        <taxon>Bacillati</taxon>
        <taxon>Bacillota</taxon>
        <taxon>Bacilli</taxon>
        <taxon>Lactobacillales</taxon>
        <taxon>Streptococcaceae</taxon>
        <taxon>Streptococcus</taxon>
    </lineage>
</organism>
<gene>
    <name evidence="1" type="primary">rpsC</name>
    <name type="ordered locus">SSU98_0078</name>
</gene>
<feature type="chain" id="PRO_0000293901" description="Small ribosomal subunit protein uS3">
    <location>
        <begin position="1"/>
        <end position="217"/>
    </location>
</feature>
<feature type="domain" description="KH type-2" evidence="1">
    <location>
        <begin position="38"/>
        <end position="106"/>
    </location>
</feature>
<proteinExistence type="inferred from homology"/>
<sequence length="217" mass="24121">MGQKVHPIGMRVGIIRDWDAKWYAEKEYADYLHEDLAIRNFIKKELADASTSTIEIERAVNKVIVSIHTAKPGMVIGKAGSNVDALRAQLNKLTGKQVHINIIEIKQPDLDAHLVGESIARQLEQRVAFRRAQKQAIQRAMRAGAKGIKTQVSGRLNGADIARAEGYSEGTVPLHTLRADIDYAWEEALTTYGKLGVKVWIYRGEVLPARKNTKGGK</sequence>
<keyword id="KW-0687">Ribonucleoprotein</keyword>
<keyword id="KW-0689">Ribosomal protein</keyword>
<keyword id="KW-0694">RNA-binding</keyword>
<keyword id="KW-0699">rRNA-binding</keyword>